<proteinExistence type="evidence at transcript level"/>
<gene>
    <name type="primary">Veph1</name>
    <name type="synonym">Veph</name>
</gene>
<dbReference type="EMBL" id="AB085187">
    <property type="protein sequence ID" value="BAC02920.1"/>
    <property type="molecule type" value="mRNA"/>
</dbReference>
<dbReference type="EMBL" id="AB085189">
    <property type="protein sequence ID" value="BAC02922.1"/>
    <property type="molecule type" value="mRNA"/>
</dbReference>
<dbReference type="EMBL" id="AK013398">
    <property type="protein sequence ID" value="BAB28831.1"/>
    <property type="molecule type" value="mRNA"/>
</dbReference>
<dbReference type="EMBL" id="AC098705">
    <property type="status" value="NOT_ANNOTATED_CDS"/>
    <property type="molecule type" value="Genomic_DNA"/>
</dbReference>
<dbReference type="EMBL" id="AC121312">
    <property type="status" value="NOT_ANNOTATED_CDS"/>
    <property type="molecule type" value="Genomic_DNA"/>
</dbReference>
<dbReference type="EMBL" id="AC121797">
    <property type="status" value="NOT_ANNOTATED_CDS"/>
    <property type="molecule type" value="Genomic_DNA"/>
</dbReference>
<dbReference type="EMBL" id="BC128271">
    <property type="protein sequence ID" value="AAI28272.1"/>
    <property type="molecule type" value="mRNA"/>
</dbReference>
<dbReference type="CCDS" id="CCDS17391.1">
    <molecule id="A1A535-1"/>
</dbReference>
<dbReference type="RefSeq" id="NP_665819.2">
    <molecule id="A1A535-1"/>
    <property type="nucleotide sequence ID" value="NM_145820.3"/>
</dbReference>
<dbReference type="BioGRID" id="215569">
    <property type="interactions" value="2"/>
</dbReference>
<dbReference type="FunCoup" id="A1A535">
    <property type="interactions" value="711"/>
</dbReference>
<dbReference type="STRING" id="10090.ENSMUSP00000029419"/>
<dbReference type="iPTMnet" id="A1A535"/>
<dbReference type="PhosphoSitePlus" id="A1A535"/>
<dbReference type="PaxDb" id="10090-ENSMUSP00000029419"/>
<dbReference type="ProteomicsDB" id="295998">
    <molecule id="A1A535-1"/>
</dbReference>
<dbReference type="ProteomicsDB" id="295999">
    <molecule id="A1A535-2"/>
</dbReference>
<dbReference type="Antibodypedia" id="18417">
    <property type="antibodies" value="48 antibodies from 16 providers"/>
</dbReference>
<dbReference type="Ensembl" id="ENSMUST00000029419.8">
    <molecule id="A1A535-1"/>
    <property type="protein sequence ID" value="ENSMUSP00000029419.7"/>
    <property type="gene ID" value="ENSMUSG00000027831.10"/>
</dbReference>
<dbReference type="GeneID" id="72789"/>
<dbReference type="KEGG" id="mmu:72789"/>
<dbReference type="UCSC" id="uc008pky.3">
    <molecule id="A1A535-2"/>
    <property type="organism name" value="mouse"/>
</dbReference>
<dbReference type="UCSC" id="uc008pkz.3">
    <molecule id="A1A535-1"/>
    <property type="organism name" value="mouse"/>
</dbReference>
<dbReference type="AGR" id="MGI:1920039"/>
<dbReference type="CTD" id="79674"/>
<dbReference type="MGI" id="MGI:1920039">
    <property type="gene designation" value="Veph1"/>
</dbReference>
<dbReference type="VEuPathDB" id="HostDB:ENSMUSG00000027831"/>
<dbReference type="eggNOG" id="KOG3723">
    <property type="taxonomic scope" value="Eukaryota"/>
</dbReference>
<dbReference type="GeneTree" id="ENSGT00390000018660"/>
<dbReference type="HOGENOM" id="CLU_010394_0_0_1"/>
<dbReference type="InParanoid" id="A1A535"/>
<dbReference type="OMA" id="WIRIMLL"/>
<dbReference type="OrthoDB" id="5869902at2759"/>
<dbReference type="PhylomeDB" id="A1A535"/>
<dbReference type="TreeFam" id="TF314736"/>
<dbReference type="BioGRID-ORCS" id="72789">
    <property type="hits" value="1 hit in 74 CRISPR screens"/>
</dbReference>
<dbReference type="ChiTaRS" id="Veph1">
    <property type="organism name" value="mouse"/>
</dbReference>
<dbReference type="PRO" id="PR:A1A535"/>
<dbReference type="Proteomes" id="UP000000589">
    <property type="component" value="Chromosome 3"/>
</dbReference>
<dbReference type="RNAct" id="A1A535">
    <property type="molecule type" value="protein"/>
</dbReference>
<dbReference type="Bgee" id="ENSMUSG00000027831">
    <property type="expression patterns" value="Expressed in otolith organ and 52 other cell types or tissues"/>
</dbReference>
<dbReference type="GO" id="GO:0005886">
    <property type="term" value="C:plasma membrane"/>
    <property type="evidence" value="ECO:0007669"/>
    <property type="project" value="UniProtKB-SubCell"/>
</dbReference>
<dbReference type="GO" id="GO:0060392">
    <property type="term" value="P:negative regulation of SMAD protein signal transduction"/>
    <property type="evidence" value="ECO:0000250"/>
    <property type="project" value="UniProtKB"/>
</dbReference>
<dbReference type="GO" id="GO:0030512">
    <property type="term" value="P:negative regulation of transforming growth factor beta receptor signaling pathway"/>
    <property type="evidence" value="ECO:0000250"/>
    <property type="project" value="UniProtKB"/>
</dbReference>
<dbReference type="CDD" id="cd01264">
    <property type="entry name" value="PH_MELT_VEPH1"/>
    <property type="match status" value="1"/>
</dbReference>
<dbReference type="FunFam" id="2.30.29.30:FF:000138">
    <property type="entry name" value="Ventricular zone-expressed PH domain-containing protein-like 1"/>
    <property type="match status" value="1"/>
</dbReference>
<dbReference type="Gene3D" id="2.30.29.30">
    <property type="entry name" value="Pleckstrin-homology domain (PH domain)/Phosphotyrosine-binding domain (PTB)"/>
    <property type="match status" value="1"/>
</dbReference>
<dbReference type="InterPro" id="IPR016024">
    <property type="entry name" value="ARM-type_fold"/>
</dbReference>
<dbReference type="InterPro" id="IPR039888">
    <property type="entry name" value="Melted-like"/>
</dbReference>
<dbReference type="InterPro" id="IPR011993">
    <property type="entry name" value="PH-like_dom_sf"/>
</dbReference>
<dbReference type="InterPro" id="IPR001849">
    <property type="entry name" value="PH_domain"/>
</dbReference>
<dbReference type="PANTHER" id="PTHR21630:SF10">
    <property type="entry name" value="VENTRICULAR ZONE-EXPRESSED PH DOMAIN-CONTAINING PROTEIN HOMOLOG 1"/>
    <property type="match status" value="1"/>
</dbReference>
<dbReference type="PANTHER" id="PTHR21630">
    <property type="entry name" value="VEPH-A/MELTED"/>
    <property type="match status" value="1"/>
</dbReference>
<dbReference type="Pfam" id="PF00169">
    <property type="entry name" value="PH"/>
    <property type="match status" value="1"/>
</dbReference>
<dbReference type="SMART" id="SM00233">
    <property type="entry name" value="PH"/>
    <property type="match status" value="1"/>
</dbReference>
<dbReference type="SUPFAM" id="SSF48371">
    <property type="entry name" value="ARM repeat"/>
    <property type="match status" value="1"/>
</dbReference>
<dbReference type="SUPFAM" id="SSF50729">
    <property type="entry name" value="PH domain-like"/>
    <property type="match status" value="1"/>
</dbReference>
<dbReference type="PROSITE" id="PS50003">
    <property type="entry name" value="PH_DOMAIN"/>
    <property type="match status" value="1"/>
</dbReference>
<organism>
    <name type="scientific">Mus musculus</name>
    <name type="common">Mouse</name>
    <dbReference type="NCBI Taxonomy" id="10090"/>
    <lineage>
        <taxon>Eukaryota</taxon>
        <taxon>Metazoa</taxon>
        <taxon>Chordata</taxon>
        <taxon>Craniata</taxon>
        <taxon>Vertebrata</taxon>
        <taxon>Euteleostomi</taxon>
        <taxon>Mammalia</taxon>
        <taxon>Eutheria</taxon>
        <taxon>Euarchontoglires</taxon>
        <taxon>Glires</taxon>
        <taxon>Rodentia</taxon>
        <taxon>Myomorpha</taxon>
        <taxon>Muroidea</taxon>
        <taxon>Muridae</taxon>
        <taxon>Murinae</taxon>
        <taxon>Mus</taxon>
        <taxon>Mus</taxon>
    </lineage>
</organism>
<sequence>MHQLFRLVLGQKDLSKAGDLFSLDDAEIEDSLTEALEQIKVISSSLDYQTNNNDQAVVEICITRITTAIRETESIEKHARALVGLWDSCLEHNLRPAGKDEDTPHAKIASDIMSCILQNYNRTPVMVLAVPIAVKFLHRGSKELCRNMSNYLSLAAITKADLLADHTEGIIKSILQGNAMLLRVLPAVYEKQPQPINRHLAELLALMSQLEQTEQYHLLRLLHVAAKRKDVEVVQKCVPFLIRNLKDSTYNDIILNILIEIAGHEPLALNSFLPMLKEIAEQFPYLTGQMARIFGAVGHVDEERARSCLRYLVSQLANMEHPFHHILLLEIKSITDAFSSILGPHSRDIFRMSNSFTNIAKLLSRQLENSKADSSRRKTSTEVSIPEKLRELNSMEPESEDHEKLQVKIQAFEDKINAESNTPGSGRRYSLDHISKEERKSIRFSRSRSLALNTVLTNGVSVEDNEVEEKAGMHASISLSQIDPLSHGIGKLPFKTDTHGSPLRNSSASHPSIIHTEPETMPETFKENIQEEILEAATSPIEYQDKLYLHLRENLSKVKAYALEIAKKVPIPDQCTIEDTMRSCVAKLFFTCSLKGHYCLYSKSSFILVSQAPQPWIQVMFLSQQSLFPEPLSIQSGSVQFLKALWEKTQDTGAHSFEVAMTESTFPQQKDLEQLQLHLEEVRFFDVFGFSETAGAWQCFMCNNPEKATVVNQDGQPLIEGKLKEKQVRWKFIKRWKTHYFTLAGNQLLFQKGKSKDDPDDSPIELSKVQSVKAVAKKRRDRSLPRAFEIFTDSKTYVFKAKDEKNAEEWLQCINVALAQAKERESREVTTYL</sequence>
<feature type="chain" id="PRO_0000297956" description="Ventricular zone-expressed PH domain-containing protein 1">
    <location>
        <begin position="1"/>
        <end position="833"/>
    </location>
</feature>
<feature type="domain" description="PH" evidence="4">
    <location>
        <begin position="716"/>
        <end position="819"/>
    </location>
</feature>
<feature type="region of interest" description="Interaction with TGFBR1" evidence="2">
    <location>
        <begin position="201"/>
        <end position="319"/>
    </location>
</feature>
<feature type="region of interest" description="Interaction with TGFBR1" evidence="2">
    <location>
        <begin position="663"/>
        <end position="833"/>
    </location>
</feature>
<feature type="splice variant" id="VSP_027434" description="In isoform B." evidence="6 7">
    <location>
        <begin position="1"/>
        <end position="580"/>
    </location>
</feature>
<feature type="sequence conflict" description="In Ref. 4; AAI28272." evidence="8" ref="4">
    <original>G</original>
    <variation>E</variation>
    <location>
        <position position="500"/>
    </location>
</feature>
<feature type="sequence conflict" description="In Ref. 4; AAI28272." evidence="8" ref="4">
    <original>T</original>
    <variation>I</variation>
    <location>
        <position position="516"/>
    </location>
</feature>
<feature type="sequence conflict" description="In Ref. 4; AAI28272." evidence="8" ref="4">
    <original>I</original>
    <variation>V</variation>
    <location>
        <position position="541"/>
    </location>
</feature>
<feature type="sequence conflict" description="In Ref. 1; BAC02920/BAC02922 and 4; AAI28272." evidence="8" ref="1 4">
    <original>H</original>
    <variation>R</variation>
    <location>
        <position position="739"/>
    </location>
</feature>
<feature type="sequence conflict" description="In Ref. 1; BAC02920/BAC02922 and 4; AAI28272." evidence="8" ref="1 4">
    <original>S</original>
    <variation>P</variation>
    <location>
        <position position="762"/>
    </location>
</feature>
<accession>A1A535</accession>
<accession>E9QP23</accession>
<accession>Q8K4P5</accession>
<accession>Q8K4P6</accession>
<accession>Q9CYR8</accession>
<name>MELT_MOUSE</name>
<protein>
    <recommendedName>
        <fullName>Ventricular zone-expressed PH domain-containing protein 1</fullName>
    </recommendedName>
    <alternativeName>
        <fullName>Protein melted homolog</fullName>
    </alternativeName>
</protein>
<evidence type="ECO:0000250" key="1"/>
<evidence type="ECO:0000250" key="2">
    <source>
        <dbReference type="UniProtKB" id="Q14D04"/>
    </source>
</evidence>
<evidence type="ECO:0000250" key="3">
    <source>
        <dbReference type="UniProtKB" id="Q9VS24"/>
    </source>
</evidence>
<evidence type="ECO:0000255" key="4">
    <source>
        <dbReference type="PROSITE-ProRule" id="PRU00145"/>
    </source>
</evidence>
<evidence type="ECO:0000269" key="5">
    <source>
    </source>
</evidence>
<evidence type="ECO:0000303" key="6">
    <source>
    </source>
</evidence>
<evidence type="ECO:0000303" key="7">
    <source>
    </source>
</evidence>
<evidence type="ECO:0000305" key="8"/>
<reference key="1">
    <citation type="journal article" date="2004" name="Biochimie">
        <title>Identification and characterization of Veph, a novel gene encoding a PH domain-containing protein expressed in the developing central nervous system of vertebrates.</title>
        <authorList>
            <person name="Muto E."/>
            <person name="Tabata Y."/>
            <person name="Taneda T."/>
            <person name="Aoki Y."/>
            <person name="Muto A."/>
            <person name="Arai K."/>
            <person name="Watanabe S."/>
        </authorList>
    </citation>
    <scope>NUCLEOTIDE SEQUENCE [MRNA] (ISOFORMS A AND B)</scope>
    <scope>TISSUE SPECIFICITY</scope>
    <scope>DEVELOPMENTAL STAGE</scope>
    <scope>DISRUPTION PHENOTYPE</scope>
</reference>
<reference key="2">
    <citation type="journal article" date="2005" name="Science">
        <title>The transcriptional landscape of the mammalian genome.</title>
        <authorList>
            <person name="Carninci P."/>
            <person name="Kasukawa T."/>
            <person name="Katayama S."/>
            <person name="Gough J."/>
            <person name="Frith M.C."/>
            <person name="Maeda N."/>
            <person name="Oyama R."/>
            <person name="Ravasi T."/>
            <person name="Lenhard B."/>
            <person name="Wells C."/>
            <person name="Kodzius R."/>
            <person name="Shimokawa K."/>
            <person name="Bajic V.B."/>
            <person name="Brenner S.E."/>
            <person name="Batalov S."/>
            <person name="Forrest A.R."/>
            <person name="Zavolan M."/>
            <person name="Davis M.J."/>
            <person name="Wilming L.G."/>
            <person name="Aidinis V."/>
            <person name="Allen J.E."/>
            <person name="Ambesi-Impiombato A."/>
            <person name="Apweiler R."/>
            <person name="Aturaliya R.N."/>
            <person name="Bailey T.L."/>
            <person name="Bansal M."/>
            <person name="Baxter L."/>
            <person name="Beisel K.W."/>
            <person name="Bersano T."/>
            <person name="Bono H."/>
            <person name="Chalk A.M."/>
            <person name="Chiu K.P."/>
            <person name="Choudhary V."/>
            <person name="Christoffels A."/>
            <person name="Clutterbuck D.R."/>
            <person name="Crowe M.L."/>
            <person name="Dalla E."/>
            <person name="Dalrymple B.P."/>
            <person name="de Bono B."/>
            <person name="Della Gatta G."/>
            <person name="di Bernardo D."/>
            <person name="Down T."/>
            <person name="Engstrom P."/>
            <person name="Fagiolini M."/>
            <person name="Faulkner G."/>
            <person name="Fletcher C.F."/>
            <person name="Fukushima T."/>
            <person name="Furuno M."/>
            <person name="Futaki S."/>
            <person name="Gariboldi M."/>
            <person name="Georgii-Hemming P."/>
            <person name="Gingeras T.R."/>
            <person name="Gojobori T."/>
            <person name="Green R.E."/>
            <person name="Gustincich S."/>
            <person name="Harbers M."/>
            <person name="Hayashi Y."/>
            <person name="Hensch T.K."/>
            <person name="Hirokawa N."/>
            <person name="Hill D."/>
            <person name="Huminiecki L."/>
            <person name="Iacono M."/>
            <person name="Ikeo K."/>
            <person name="Iwama A."/>
            <person name="Ishikawa T."/>
            <person name="Jakt M."/>
            <person name="Kanapin A."/>
            <person name="Katoh M."/>
            <person name="Kawasawa Y."/>
            <person name="Kelso J."/>
            <person name="Kitamura H."/>
            <person name="Kitano H."/>
            <person name="Kollias G."/>
            <person name="Krishnan S.P."/>
            <person name="Kruger A."/>
            <person name="Kummerfeld S.K."/>
            <person name="Kurochkin I.V."/>
            <person name="Lareau L.F."/>
            <person name="Lazarevic D."/>
            <person name="Lipovich L."/>
            <person name="Liu J."/>
            <person name="Liuni S."/>
            <person name="McWilliam S."/>
            <person name="Madan Babu M."/>
            <person name="Madera M."/>
            <person name="Marchionni L."/>
            <person name="Matsuda H."/>
            <person name="Matsuzawa S."/>
            <person name="Miki H."/>
            <person name="Mignone F."/>
            <person name="Miyake S."/>
            <person name="Morris K."/>
            <person name="Mottagui-Tabar S."/>
            <person name="Mulder N."/>
            <person name="Nakano N."/>
            <person name="Nakauchi H."/>
            <person name="Ng P."/>
            <person name="Nilsson R."/>
            <person name="Nishiguchi S."/>
            <person name="Nishikawa S."/>
            <person name="Nori F."/>
            <person name="Ohara O."/>
            <person name="Okazaki Y."/>
            <person name="Orlando V."/>
            <person name="Pang K.C."/>
            <person name="Pavan W.J."/>
            <person name="Pavesi G."/>
            <person name="Pesole G."/>
            <person name="Petrovsky N."/>
            <person name="Piazza S."/>
            <person name="Reed J."/>
            <person name="Reid J.F."/>
            <person name="Ring B.Z."/>
            <person name="Ringwald M."/>
            <person name="Rost B."/>
            <person name="Ruan Y."/>
            <person name="Salzberg S.L."/>
            <person name="Sandelin A."/>
            <person name="Schneider C."/>
            <person name="Schoenbach C."/>
            <person name="Sekiguchi K."/>
            <person name="Semple C.A."/>
            <person name="Seno S."/>
            <person name="Sessa L."/>
            <person name="Sheng Y."/>
            <person name="Shibata Y."/>
            <person name="Shimada H."/>
            <person name="Shimada K."/>
            <person name="Silva D."/>
            <person name="Sinclair B."/>
            <person name="Sperling S."/>
            <person name="Stupka E."/>
            <person name="Sugiura K."/>
            <person name="Sultana R."/>
            <person name="Takenaka Y."/>
            <person name="Taki K."/>
            <person name="Tammoja K."/>
            <person name="Tan S.L."/>
            <person name="Tang S."/>
            <person name="Taylor M.S."/>
            <person name="Tegner J."/>
            <person name="Teichmann S.A."/>
            <person name="Ueda H.R."/>
            <person name="van Nimwegen E."/>
            <person name="Verardo R."/>
            <person name="Wei C.L."/>
            <person name="Yagi K."/>
            <person name="Yamanishi H."/>
            <person name="Zabarovsky E."/>
            <person name="Zhu S."/>
            <person name="Zimmer A."/>
            <person name="Hide W."/>
            <person name="Bult C."/>
            <person name="Grimmond S.M."/>
            <person name="Teasdale R.D."/>
            <person name="Liu E.T."/>
            <person name="Brusic V."/>
            <person name="Quackenbush J."/>
            <person name="Wahlestedt C."/>
            <person name="Mattick J.S."/>
            <person name="Hume D.A."/>
            <person name="Kai C."/>
            <person name="Sasaki D."/>
            <person name="Tomaru Y."/>
            <person name="Fukuda S."/>
            <person name="Kanamori-Katayama M."/>
            <person name="Suzuki M."/>
            <person name="Aoki J."/>
            <person name="Arakawa T."/>
            <person name="Iida J."/>
            <person name="Imamura K."/>
            <person name="Itoh M."/>
            <person name="Kato T."/>
            <person name="Kawaji H."/>
            <person name="Kawagashira N."/>
            <person name="Kawashima T."/>
            <person name="Kojima M."/>
            <person name="Kondo S."/>
            <person name="Konno H."/>
            <person name="Nakano K."/>
            <person name="Ninomiya N."/>
            <person name="Nishio T."/>
            <person name="Okada M."/>
            <person name="Plessy C."/>
            <person name="Shibata K."/>
            <person name="Shiraki T."/>
            <person name="Suzuki S."/>
            <person name="Tagami M."/>
            <person name="Waki K."/>
            <person name="Watahiki A."/>
            <person name="Okamura-Oho Y."/>
            <person name="Suzuki H."/>
            <person name="Kawai J."/>
            <person name="Hayashizaki Y."/>
        </authorList>
    </citation>
    <scope>NUCLEOTIDE SEQUENCE [LARGE SCALE MRNA] (ISOFORM B)</scope>
    <source>
        <strain>C57BL/6J</strain>
        <tissue>Embryo</tissue>
    </source>
</reference>
<reference key="3">
    <citation type="journal article" date="2009" name="PLoS Biol.">
        <title>Lineage-specific biology revealed by a finished genome assembly of the mouse.</title>
        <authorList>
            <person name="Church D.M."/>
            <person name="Goodstadt L."/>
            <person name="Hillier L.W."/>
            <person name="Zody M.C."/>
            <person name="Goldstein S."/>
            <person name="She X."/>
            <person name="Bult C.J."/>
            <person name="Agarwala R."/>
            <person name="Cherry J.L."/>
            <person name="DiCuccio M."/>
            <person name="Hlavina W."/>
            <person name="Kapustin Y."/>
            <person name="Meric P."/>
            <person name="Maglott D."/>
            <person name="Birtle Z."/>
            <person name="Marques A.C."/>
            <person name="Graves T."/>
            <person name="Zhou S."/>
            <person name="Teague B."/>
            <person name="Potamousis K."/>
            <person name="Churas C."/>
            <person name="Place M."/>
            <person name="Herschleb J."/>
            <person name="Runnheim R."/>
            <person name="Forrest D."/>
            <person name="Amos-Landgraf J."/>
            <person name="Schwartz D.C."/>
            <person name="Cheng Z."/>
            <person name="Lindblad-Toh K."/>
            <person name="Eichler E.E."/>
            <person name="Ponting C.P."/>
        </authorList>
    </citation>
    <scope>NUCLEOTIDE SEQUENCE [LARGE SCALE GENOMIC DNA]</scope>
    <source>
        <strain>C57BL/6J</strain>
    </source>
</reference>
<reference key="4">
    <citation type="journal article" date="2004" name="Genome Res.">
        <title>The status, quality, and expansion of the NIH full-length cDNA project: the Mammalian Gene Collection (MGC).</title>
        <authorList>
            <consortium name="The MGC Project Team"/>
        </authorList>
    </citation>
    <scope>NUCLEOTIDE SEQUENCE [LARGE SCALE MRNA] (ISOFORM A)</scope>
</reference>
<comment type="function">
    <text evidence="2">Interacts with TGF-beta receptor type-1 (TGFBR1) and inhibits dissociation of activated SMAD2 from TGFBR1, impeding its nuclear accumulation and resulting in impaired TGF-beta signaling. May also affect FOXO, Hippo and Wnt signaling.</text>
</comment>
<comment type="subunit">
    <text evidence="2">Interacts with TGFBR1.</text>
</comment>
<comment type="subcellular location">
    <subcellularLocation>
        <location evidence="2">Cell membrane</location>
        <topology evidence="3">Peripheral membrane protein</topology>
        <orientation evidence="3">Cytoplasmic side</orientation>
    </subcellularLocation>
</comment>
<comment type="alternative products">
    <event type="alternative splicing"/>
    <isoform>
        <id>A1A535-1</id>
        <name>A</name>
        <sequence type="displayed"/>
    </isoform>
    <isoform>
        <id>A1A535-2</id>
        <name>B</name>
        <sequence type="described" ref="VSP_027434"/>
    </isoform>
</comment>
<comment type="tissue specificity">
    <text evidence="5">Specifically expressed in kidney and eye. In the eye, expressed in retinal pigmented epithelium but not in the neural retina.</text>
</comment>
<comment type="developmental stage">
    <text evidence="5">Strongly expressed in brain and eye from 12 dpc to 17 dpc. After birth, brain expression decreases, whereas eye expression remains stable.</text>
</comment>
<comment type="domain">
    <text evidence="1">The PH domain is required for membrane targeting.</text>
</comment>
<comment type="disruption phenotype">
    <text evidence="5">No visible phenotype.</text>
</comment>
<comment type="similarity">
    <text evidence="8">Belongs to the MELT/VEPH family.</text>
</comment>
<keyword id="KW-0025">Alternative splicing</keyword>
<keyword id="KW-1003">Cell membrane</keyword>
<keyword id="KW-0472">Membrane</keyword>
<keyword id="KW-1185">Reference proteome</keyword>